<proteinExistence type="inferred from homology"/>
<geneLocation type="plasmid">
    <name>pHV4</name>
</geneLocation>
<name>CAS2_HALVD</name>
<keyword id="KW-0051">Antiviral defense</keyword>
<keyword id="KW-0255">Endonuclease</keyword>
<keyword id="KW-0378">Hydrolase</keyword>
<keyword id="KW-0460">Magnesium</keyword>
<keyword id="KW-0479">Metal-binding</keyword>
<keyword id="KW-0540">Nuclease</keyword>
<keyword id="KW-0614">Plasmid</keyword>
<keyword id="KW-1185">Reference proteome</keyword>
<gene>
    <name evidence="1" type="primary">cas2</name>
    <name type="ordered locus">HVO_A0212</name>
    <name evidence="5" type="ORF">C498_09741</name>
</gene>
<reference key="1">
    <citation type="journal article" date="2010" name="PLoS ONE">
        <title>The complete genome sequence of Haloferax volcanii DS2, a model archaeon.</title>
        <authorList>
            <person name="Hartman A.L."/>
            <person name="Norais C."/>
            <person name="Badger J.H."/>
            <person name="Delmas S."/>
            <person name="Haldenby S."/>
            <person name="Madupu R."/>
            <person name="Robinson J."/>
            <person name="Khouri H."/>
            <person name="Ren Q."/>
            <person name="Lowe T.M."/>
            <person name="Maupin-Furlow J."/>
            <person name="Pohlschroder M."/>
            <person name="Daniels C."/>
            <person name="Pfeiffer F."/>
            <person name="Allers T."/>
            <person name="Eisen J.A."/>
        </authorList>
    </citation>
    <scope>NUCLEOTIDE SEQUENCE [LARGE SCALE GENOMIC DNA]</scope>
    <source>
        <strain>ATCC 29605 / DSM 3757 / JCM 8879 / NBRC 14742 / NCIMB 2012 / VKM B-1768 / DS2</strain>
    </source>
</reference>
<reference key="2">
    <citation type="journal article" date="2014" name="PLoS Genet.">
        <title>Phylogenetically driven sequencing of extremely halophilic archaea reveals strategies for static and dynamic osmo-response.</title>
        <authorList>
            <person name="Becker E.A."/>
            <person name="Seitzer P.M."/>
            <person name="Tritt A."/>
            <person name="Larsen D."/>
            <person name="Krusor M."/>
            <person name="Yao A.I."/>
            <person name="Wu D."/>
            <person name="Madern D."/>
            <person name="Eisen J.A."/>
            <person name="Darling A.E."/>
            <person name="Facciotti M.T."/>
        </authorList>
    </citation>
    <scope>NUCLEOTIDE SEQUENCE [LARGE SCALE GENOMIC DNA]</scope>
    <source>
        <strain>ATCC 29605 / DSM 3757 / JCM 8879 / NBRC 14742 / NCIMB 2012 / VKM B-1768 / DS2</strain>
    </source>
</reference>
<reference key="3">
    <citation type="journal article" date="2012" name="J. Biol. Chem.">
        <title>An archaeal immune system can detect multiple protospacer adjacent motifs (PAMs) to target invader DNA.</title>
        <authorList>
            <person name="Fischer S."/>
            <person name="Maier L.K."/>
            <person name="Stoll B."/>
            <person name="Brendel J."/>
            <person name="Fischer E."/>
            <person name="Pfeiffer F."/>
            <person name="Dyall-Smith M."/>
            <person name="Marchfelder A."/>
        </authorList>
    </citation>
    <scope>FUNCTION</scope>
    <scope>DISRUPTION PHENOTYPE</scope>
    <source>
        <strain>DS2 / DS70 / H26</strain>
    </source>
</reference>
<sequence>MQVIVVYDVPAKRTRIYRKLLRRRLEHLQYSVFFGELTAGQVTAMKNEIESELEPTDSIVVFEFDNPHAFDHTTFGDADEPGSRFT</sequence>
<feature type="chain" id="PRO_0000432149" description="CRISPR-associated endoribonuclease Cas2">
    <location>
        <begin position="1"/>
        <end position="86"/>
    </location>
</feature>
<feature type="binding site" evidence="1">
    <location>
        <position position="8"/>
    </location>
    <ligand>
        <name>Mg(2+)</name>
        <dbReference type="ChEBI" id="CHEBI:18420"/>
        <note>catalytic</note>
    </ligand>
</feature>
<organism>
    <name type="scientific">Haloferax volcanii (strain ATCC 29605 / DSM 3757 / JCM 8879 / NBRC 14742 / NCIMB 2012 / VKM B-1768 / DS2)</name>
    <name type="common">Halobacterium volcanii</name>
    <dbReference type="NCBI Taxonomy" id="309800"/>
    <lineage>
        <taxon>Archaea</taxon>
        <taxon>Methanobacteriati</taxon>
        <taxon>Methanobacteriota</taxon>
        <taxon>Stenosarchaea group</taxon>
        <taxon>Halobacteria</taxon>
        <taxon>Halobacteriales</taxon>
        <taxon>Haloferacaceae</taxon>
        <taxon>Haloferax</taxon>
    </lineage>
</organism>
<evidence type="ECO:0000255" key="1">
    <source>
        <dbReference type="HAMAP-Rule" id="MF_01471"/>
    </source>
</evidence>
<evidence type="ECO:0000269" key="2">
    <source>
    </source>
</evidence>
<evidence type="ECO:0000303" key="3">
    <source>
    </source>
</evidence>
<evidence type="ECO:0000303" key="4">
    <source>
    </source>
</evidence>
<evidence type="ECO:0000312" key="5">
    <source>
        <dbReference type="EMBL" id="ELY32099.1"/>
    </source>
</evidence>
<accession>D4GQP1</accession>
<dbReference type="EC" id="3.1.-.-" evidence="1"/>
<dbReference type="EMBL" id="CP001955">
    <property type="protein sequence ID" value="ADE02207.1"/>
    <property type="molecule type" value="Genomic_DNA"/>
</dbReference>
<dbReference type="EMBL" id="AOHU01000052">
    <property type="protein sequence ID" value="ELY32099.1"/>
    <property type="molecule type" value="Genomic_DNA"/>
</dbReference>
<dbReference type="RefSeq" id="WP_004043133.1">
    <property type="nucleotide sequence ID" value="NC_013966.1"/>
</dbReference>
<dbReference type="SMR" id="D4GQP1"/>
<dbReference type="PaxDb" id="309800-C498_09741"/>
<dbReference type="EnsemblBacteria" id="ADE02207">
    <property type="protein sequence ID" value="ADE02207"/>
    <property type="gene ID" value="HVO_A0212"/>
</dbReference>
<dbReference type="GeneID" id="8923341"/>
<dbReference type="KEGG" id="hvo:HVO_A0212"/>
<dbReference type="PATRIC" id="fig|309800.29.peg.1902"/>
<dbReference type="eggNOG" id="arCOG04194">
    <property type="taxonomic scope" value="Archaea"/>
</dbReference>
<dbReference type="HOGENOM" id="CLU_161124_0_0_2"/>
<dbReference type="OrthoDB" id="43236at2157"/>
<dbReference type="Proteomes" id="UP000008243">
    <property type="component" value="Plasmid pHV4"/>
</dbReference>
<dbReference type="Proteomes" id="UP000011532">
    <property type="component" value="Unassembled WGS sequence"/>
</dbReference>
<dbReference type="GO" id="GO:0046872">
    <property type="term" value="F:metal ion binding"/>
    <property type="evidence" value="ECO:0007669"/>
    <property type="project" value="UniProtKB-UniRule"/>
</dbReference>
<dbReference type="GO" id="GO:0004521">
    <property type="term" value="F:RNA endonuclease activity"/>
    <property type="evidence" value="ECO:0007669"/>
    <property type="project" value="InterPro"/>
</dbReference>
<dbReference type="GO" id="GO:0051607">
    <property type="term" value="P:defense response to virus"/>
    <property type="evidence" value="ECO:0007669"/>
    <property type="project" value="UniProtKB-UniRule"/>
</dbReference>
<dbReference type="GO" id="GO:0043571">
    <property type="term" value="P:maintenance of CRISPR repeat elements"/>
    <property type="evidence" value="ECO:0007669"/>
    <property type="project" value="UniProtKB-UniRule"/>
</dbReference>
<dbReference type="CDD" id="cd09725">
    <property type="entry name" value="Cas2_I_II_III"/>
    <property type="match status" value="1"/>
</dbReference>
<dbReference type="Gene3D" id="3.30.70.240">
    <property type="match status" value="1"/>
</dbReference>
<dbReference type="HAMAP" id="MF_01471">
    <property type="entry name" value="Cas2"/>
    <property type="match status" value="1"/>
</dbReference>
<dbReference type="InterPro" id="IPR021127">
    <property type="entry name" value="CRISPR_associated_Cas2"/>
</dbReference>
<dbReference type="InterPro" id="IPR019199">
    <property type="entry name" value="Virulence_VapD/CRISPR_Cas2"/>
</dbReference>
<dbReference type="NCBIfam" id="TIGR01573">
    <property type="entry name" value="cas2"/>
    <property type="match status" value="1"/>
</dbReference>
<dbReference type="PANTHER" id="PTHR34405">
    <property type="entry name" value="CRISPR-ASSOCIATED ENDORIBONUCLEASE CAS2"/>
    <property type="match status" value="1"/>
</dbReference>
<dbReference type="PANTHER" id="PTHR34405:SF3">
    <property type="entry name" value="CRISPR-ASSOCIATED ENDORIBONUCLEASE CAS2 3"/>
    <property type="match status" value="1"/>
</dbReference>
<dbReference type="Pfam" id="PF09827">
    <property type="entry name" value="CRISPR_Cas2"/>
    <property type="match status" value="1"/>
</dbReference>
<dbReference type="SUPFAM" id="SSF143430">
    <property type="entry name" value="TTP0101/SSO1404-like"/>
    <property type="match status" value="1"/>
</dbReference>
<protein>
    <recommendedName>
        <fullName evidence="1">CRISPR-associated endoribonuclease Cas2</fullName>
        <ecNumber evidence="1">3.1.-.-</ecNumber>
    </recommendedName>
</protein>
<comment type="function">
    <text evidence="1 2">CRISPR (clustered regularly interspaced short palindromic repeat), is an adaptive immune system that provides protection against mobile genetic elements (viruses, transposable elements and conjugative plasmids). CRISPR clusters contain sequences complementary to antecedent mobile elements and target invading nucleic acids. CRISPR clusters are transcribed and processed into CRISPR RNA (crRNA). Functions as a ssRNA-specific endoribonuclease. Involved in the integration of spacer DNA into the CRISPR cassette. Plasmid targeted by CRISPR locus P1 transform wild-type cells very poorly (PubMed:22767603).</text>
</comment>
<comment type="cofactor">
    <cofactor evidence="1">
        <name>Mg(2+)</name>
        <dbReference type="ChEBI" id="CHEBI:18420"/>
    </cofactor>
</comment>
<comment type="subunit">
    <text evidence="1">Homodimer, forms a heterotetramer with a Cas1 homodimer.</text>
</comment>
<comment type="disruption phenotype">
    <text evidence="2">Loss of the 8 Cas genes in this locus (cas1, cas2, cas3, cas4, cas5, cas6, cas7 and cas8b) leads to loss of CRISPR interference against plasmid targeted by this CRISPR locus, i.e. plasmid is not destroyed by CRISPR.</text>
</comment>
<comment type="miscellaneous">
    <text evidence="3 4">There are 3 CRISPR RNA loci in this organism and a single cas gene locus. A CRISPR-Cas type I-B system.</text>
</comment>
<comment type="similarity">
    <text evidence="1">Belongs to the CRISPR-associated endoribonuclease Cas2 protein family.</text>
</comment>